<protein>
    <recommendedName>
        <fullName evidence="7">Pleiotrophin-B</fullName>
        <shortName>PTN-B</shortName>
    </recommendedName>
    <alternativeName>
        <fullName>Pleiotrophic factor-beta-2</fullName>
        <shortName>PTF-beta-2</shortName>
        <shortName>X-PTF-beta2</shortName>
    </alternativeName>
</protein>
<accession>P48533</accession>
<accession>Q6DDL1</accession>
<gene>
    <name type="primary">ptn-b</name>
</gene>
<comment type="function">
    <text evidence="1 4">Secreted growth factor that mediates its signal through cell-surface proteoglycan and non-proteoglycan receptors (By similarity). Binds cell-surface proteoglycan receptor via their chondroitin sulfate (CS) groups (By similarity). Thereby regulates many processes like cell proliferation, cell survival, cell growth, cell differentiation and cell migration (By similarity). Has antibacterial activity against both Gram-positive and Gram-negative bacteria (PubMed:20308059).</text>
</comment>
<comment type="subcellular location">
    <subcellularLocation>
        <location evidence="1">Secreted</location>
    </subcellularLocation>
</comment>
<comment type="tissue specificity">
    <text evidence="5">Expressed in high levels in brain and eye. Lower levels in bone. In the tailbud embryo stage, it is expressed exclusively in the central nervous system, especially in the hind region of the brain.</text>
</comment>
<comment type="similarity">
    <text evidence="7">Belongs to the pleiotrophin family.</text>
</comment>
<sequence>MHHQHGLFMLALLAFLLVMTVLGTDTGKKDKQEKKVKKSDCGDWQWSVCVPTSGDCGLGTREGTRSGKECKQTIKTQKCKIPCNWKKQFGAECKYQFQEWGDCDPETGLKTRNGNLKRALHNAECQKTVTLSKPCGKVTKPKLQESKKKKKEGKNKEKLLD</sequence>
<keyword id="KW-0044">Antibiotic</keyword>
<keyword id="KW-0929">Antimicrobial</keyword>
<keyword id="KW-0217">Developmental protein</keyword>
<keyword id="KW-1015">Disulfide bond</keyword>
<keyword id="KW-0339">Growth factor</keyword>
<keyword id="KW-0358">Heparin-binding</keyword>
<keyword id="KW-0497">Mitogen</keyword>
<keyword id="KW-1185">Reference proteome</keyword>
<keyword id="KW-0964">Secreted</keyword>
<keyword id="KW-0732">Signal</keyword>
<organism>
    <name type="scientific">Xenopus laevis</name>
    <name type="common">African clawed frog</name>
    <dbReference type="NCBI Taxonomy" id="8355"/>
    <lineage>
        <taxon>Eukaryota</taxon>
        <taxon>Metazoa</taxon>
        <taxon>Chordata</taxon>
        <taxon>Craniata</taxon>
        <taxon>Vertebrata</taxon>
        <taxon>Euteleostomi</taxon>
        <taxon>Amphibia</taxon>
        <taxon>Batrachia</taxon>
        <taxon>Anura</taxon>
        <taxon>Pipoidea</taxon>
        <taxon>Pipidae</taxon>
        <taxon>Xenopodinae</taxon>
        <taxon>Xenopus</taxon>
        <taxon>Xenopus</taxon>
    </lineage>
</organism>
<dbReference type="EMBL" id="D42060">
    <property type="protein sequence ID" value="BAA07660.1"/>
    <property type="molecule type" value="mRNA"/>
</dbReference>
<dbReference type="EMBL" id="BC077546">
    <property type="protein sequence ID" value="AAH77546.1"/>
    <property type="molecule type" value="mRNA"/>
</dbReference>
<dbReference type="PIR" id="JC4275">
    <property type="entry name" value="JC4275"/>
</dbReference>
<dbReference type="RefSeq" id="NP_001184206.1">
    <property type="nucleotide sequence ID" value="NM_001197277.1"/>
</dbReference>
<dbReference type="SMR" id="P48533"/>
<dbReference type="DNASU" id="100505443"/>
<dbReference type="GeneID" id="100505441"/>
<dbReference type="KEGG" id="xla:100505441"/>
<dbReference type="AGR" id="Xenbase:XB-GENE-17344052"/>
<dbReference type="CTD" id="100505441"/>
<dbReference type="Xenbase" id="XB-GENE-17344052">
    <property type="gene designation" value="ptn.S"/>
</dbReference>
<dbReference type="OrthoDB" id="8818336at2759"/>
<dbReference type="Proteomes" id="UP000186698">
    <property type="component" value="Chromosome 3S"/>
</dbReference>
<dbReference type="Bgee" id="100505441">
    <property type="expression patterns" value="Expressed in brain and 6 other cell types or tissues"/>
</dbReference>
<dbReference type="GO" id="GO:0005576">
    <property type="term" value="C:extracellular region"/>
    <property type="evidence" value="ECO:0000318"/>
    <property type="project" value="GO_Central"/>
</dbReference>
<dbReference type="GO" id="GO:0005615">
    <property type="term" value="C:extracellular space"/>
    <property type="evidence" value="ECO:0000250"/>
    <property type="project" value="UniProtKB"/>
</dbReference>
<dbReference type="GO" id="GO:0035374">
    <property type="term" value="F:chondroitin sulfate binding"/>
    <property type="evidence" value="ECO:0000250"/>
    <property type="project" value="UniProtKB"/>
</dbReference>
<dbReference type="GO" id="GO:0008083">
    <property type="term" value="F:growth factor activity"/>
    <property type="evidence" value="ECO:0000250"/>
    <property type="project" value="UniProtKB"/>
</dbReference>
<dbReference type="GO" id="GO:0008201">
    <property type="term" value="F:heparin binding"/>
    <property type="evidence" value="ECO:0000250"/>
    <property type="project" value="UniProtKB"/>
</dbReference>
<dbReference type="GO" id="GO:0042742">
    <property type="term" value="P:defense response to bacterium"/>
    <property type="evidence" value="ECO:0007669"/>
    <property type="project" value="UniProtKB-KW"/>
</dbReference>
<dbReference type="GO" id="GO:0051781">
    <property type="term" value="P:positive regulation of cell division"/>
    <property type="evidence" value="ECO:0007669"/>
    <property type="project" value="UniProtKB-KW"/>
</dbReference>
<dbReference type="GO" id="GO:0008284">
    <property type="term" value="P:positive regulation of cell population proliferation"/>
    <property type="evidence" value="ECO:0000250"/>
    <property type="project" value="UniProtKB"/>
</dbReference>
<dbReference type="GO" id="GO:0009617">
    <property type="term" value="P:response to bacterium"/>
    <property type="evidence" value="ECO:0000315"/>
    <property type="project" value="UniProtKB"/>
</dbReference>
<dbReference type="FunFam" id="2.20.60.10:FF:000001">
    <property type="entry name" value="Pleiotrophin"/>
    <property type="match status" value="1"/>
</dbReference>
<dbReference type="FunFam" id="2.30.90.10:FF:000001">
    <property type="entry name" value="Pleiotrophin"/>
    <property type="match status" value="1"/>
</dbReference>
<dbReference type="Gene3D" id="2.30.90.10">
    <property type="entry name" value="Heparin-binding Growth Factor, Midkine, Chain A- C-terminal Domain"/>
    <property type="match status" value="1"/>
</dbReference>
<dbReference type="Gene3D" id="2.20.60.10">
    <property type="entry name" value="Pleiotrophin/Midkine, N-terminal domain"/>
    <property type="match status" value="1"/>
</dbReference>
<dbReference type="InterPro" id="IPR000762">
    <property type="entry name" value="Midkine_heparin-bd_GF"/>
</dbReference>
<dbReference type="InterPro" id="IPR020090">
    <property type="entry name" value="PTN/MK_C_dom"/>
</dbReference>
<dbReference type="InterPro" id="IPR038130">
    <property type="entry name" value="PTN/MK_C_dom_sf"/>
</dbReference>
<dbReference type="InterPro" id="IPR020091">
    <property type="entry name" value="PTN/MK_diS_sf"/>
</dbReference>
<dbReference type="InterPro" id="IPR020089">
    <property type="entry name" value="PTN/MK_N_dom"/>
</dbReference>
<dbReference type="InterPro" id="IPR037122">
    <property type="entry name" value="PTN/MK_N_dom_sf"/>
</dbReference>
<dbReference type="InterPro" id="IPR020092">
    <property type="entry name" value="PTN_MK_heparin-bd_GF_CS"/>
</dbReference>
<dbReference type="PANTHER" id="PTHR13850:SF1">
    <property type="entry name" value="PLEIOTROPHIN"/>
    <property type="match status" value="1"/>
</dbReference>
<dbReference type="PANTHER" id="PTHR13850">
    <property type="entry name" value="PLEIOTROPHIN FAMILY MEMBER"/>
    <property type="match status" value="1"/>
</dbReference>
<dbReference type="Pfam" id="PF01091">
    <property type="entry name" value="PTN_MK_C"/>
    <property type="match status" value="1"/>
</dbReference>
<dbReference type="Pfam" id="PF05196">
    <property type="entry name" value="PTN_MK_N"/>
    <property type="match status" value="1"/>
</dbReference>
<dbReference type="PRINTS" id="PR00269">
    <property type="entry name" value="PTNMIDKINE"/>
</dbReference>
<dbReference type="SMART" id="SM00193">
    <property type="entry name" value="PTN"/>
    <property type="match status" value="1"/>
</dbReference>
<dbReference type="SUPFAM" id="SSF57288">
    <property type="entry name" value="Midkine"/>
    <property type="match status" value="2"/>
</dbReference>
<dbReference type="PROSITE" id="PS00619">
    <property type="entry name" value="PTN_MK_1"/>
    <property type="match status" value="1"/>
</dbReference>
<dbReference type="PROSITE" id="PS00620">
    <property type="entry name" value="PTN_MK_2"/>
    <property type="match status" value="1"/>
</dbReference>
<evidence type="ECO:0000250" key="1">
    <source>
        <dbReference type="UniProtKB" id="P21246"/>
    </source>
</evidence>
<evidence type="ECO:0000255" key="2"/>
<evidence type="ECO:0000256" key="3">
    <source>
        <dbReference type="SAM" id="MobiDB-lite"/>
    </source>
</evidence>
<evidence type="ECO:0000269" key="4">
    <source>
    </source>
</evidence>
<evidence type="ECO:0000269" key="5">
    <source>
    </source>
</evidence>
<evidence type="ECO:0000269" key="6">
    <source ref="2"/>
</evidence>
<evidence type="ECO:0000305" key="7"/>
<feature type="signal peptide" evidence="2">
    <location>
        <begin position="1"/>
        <end position="23"/>
    </location>
</feature>
<feature type="chain" id="PRO_0000024669" description="Pleiotrophin-B">
    <location>
        <begin position="24"/>
        <end position="161"/>
    </location>
</feature>
<feature type="region of interest" description="Chondroitin sulfate binding" evidence="1">
    <location>
        <begin position="86"/>
        <end position="93"/>
    </location>
</feature>
<feature type="region of interest" description="Chondroitin sulfate binding" evidence="1">
    <location>
        <begin position="117"/>
        <end position="125"/>
    </location>
</feature>
<feature type="region of interest" description="Disordered" evidence="3">
    <location>
        <begin position="136"/>
        <end position="161"/>
    </location>
</feature>
<feature type="region of interest" description="Chondroitin sulfate A binding" evidence="1">
    <location>
        <begin position="141"/>
        <end position="161"/>
    </location>
</feature>
<feature type="disulfide bond" evidence="1">
    <location>
        <begin position="41"/>
        <end position="70"/>
    </location>
</feature>
<feature type="disulfide bond" evidence="1">
    <location>
        <begin position="49"/>
        <end position="79"/>
    </location>
</feature>
<feature type="disulfide bond" evidence="1">
    <location>
        <begin position="56"/>
        <end position="83"/>
    </location>
</feature>
<feature type="disulfide bond" evidence="1">
    <location>
        <begin position="93"/>
        <end position="125"/>
    </location>
</feature>
<feature type="disulfide bond" evidence="1">
    <location>
        <begin position="103"/>
        <end position="135"/>
    </location>
</feature>
<feature type="sequence variant" description="In variant 1." evidence="5">
    <original>H</original>
    <variation>L</variation>
    <location>
        <position position="3"/>
    </location>
</feature>
<feature type="sequence variant" description="In variants 2 and 3." evidence="5">
    <original>L</original>
    <variation>M</variation>
    <location>
        <position position="17"/>
    </location>
</feature>
<feature type="sequence variant" description="In variants 2, 3 and 4." evidence="5 6">
    <original>K</original>
    <variation>T</variation>
    <location>
        <position position="68"/>
    </location>
</feature>
<feature type="sequence variant" description="In variant 2." evidence="5">
    <original>V</original>
    <variation>L</variation>
    <location>
        <position position="138"/>
    </location>
</feature>
<feature type="sequence conflict" description="In Ref. 2; AAH77546." evidence="7" ref="2">
    <original>Q</original>
    <variation>H</variation>
    <location>
        <position position="4"/>
    </location>
</feature>
<feature type="sequence conflict" description="In Ref. 2; AAH77546." evidence="7" ref="2">
    <original>A</original>
    <variation>T</variation>
    <location>
        <position position="11"/>
    </location>
</feature>
<name>PTNB_XENLA</name>
<proteinExistence type="evidence at transcript level"/>
<reference key="1">
    <citation type="journal article" date="1995" name="Biochem. Biophys. Res. Commun.">
        <title>Developmental and differential regulations in gene expression of Xenopus pleiotrophic factors-alpha and -beta.</title>
        <authorList>
            <person name="Tsujimura A."/>
            <person name="Yasojima K."/>
            <person name="Kuboki Y."/>
            <person name="Suzuki A."/>
            <person name="Ueno N."/>
            <person name="Shiokawa K."/>
            <person name="Hashimoto-Gotoh T."/>
        </authorList>
    </citation>
    <scope>NUCLEOTIDE SEQUENCE [MRNA]</scope>
    <scope>TISSUE SPECIFICITY</scope>
    <scope>VARIANTS LEU-3; MET-17; THR-68 AND LEU-138</scope>
    <source>
        <tissue>Brain</tissue>
    </source>
</reference>
<reference key="2">
    <citation type="submission" date="2004-07" db="EMBL/GenBank/DDBJ databases">
        <authorList>
            <consortium name="NIH - Xenopus Gene Collection (XGC) project"/>
        </authorList>
    </citation>
    <scope>NUCLEOTIDE SEQUENCE [LARGE SCALE MRNA]</scope>
    <scope>VARIANT THR-68</scope>
    <source>
        <tissue>Eye</tissue>
    </source>
</reference>
<reference key="3">
    <citation type="journal article" date="2010" name="J. Biol. Chem.">
        <title>Midkine and pleiotrophin have bactericidal properties: preserved antibacterial activity in a family of heparin-binding growth factors during evolution.</title>
        <authorList>
            <person name="Svensson S.L."/>
            <person name="Pasupuleti M."/>
            <person name="Walse B."/>
            <person name="Malmsten M."/>
            <person name="Morgelin M."/>
            <person name="Sjogren C."/>
            <person name="Olin A.I."/>
            <person name="Collin M."/>
            <person name="Schmidtchen A."/>
            <person name="Palmer R."/>
            <person name="Egesten A."/>
        </authorList>
    </citation>
    <scope>FUNCTION</scope>
</reference>